<sequence>MDRIKIVGGNKLNGVIPISGAKNAALPLMIASLLTDDTLTLENVPHLADVEQLIRILSNHGVDYSVNGRREHQNGPYSRTIHFTARNIVDTTAPYELVSRMRASFWVIGPLLARMGEANVSLPGGCAIGTRPVDLLLDALLALGAEIDIENGYAKAKARNGLVGARYKFPKVSVGATHVMLMAATLAKGETIIENAAREPEVANLADCLNAMGAKISGAGSSTIHVQGVTNLSGARVRIIPDRIEAGTYAMAVAMTGGDVLLEGAQESQLSCVLETLRQAGAEINETNSGLRVVRNGHGIQPVDITTDPFPGFPTDLQAQFMGLMTRAKGTSHITETIFENRFMHVQELARLGAKISLSGQTATVEGVERLKGAQVMATDLRASVSLVIAGLAAEGETIVNRVYHLDRGFERLEEKLSRCGADVKRISG</sequence>
<comment type="function">
    <text evidence="1">Cell wall formation. Adds enolpyruvyl to UDP-N-acetylglucosamine.</text>
</comment>
<comment type="catalytic activity">
    <reaction evidence="1">
        <text>phosphoenolpyruvate + UDP-N-acetyl-alpha-D-glucosamine = UDP-N-acetyl-3-O-(1-carboxyvinyl)-alpha-D-glucosamine + phosphate</text>
        <dbReference type="Rhea" id="RHEA:18681"/>
        <dbReference type="ChEBI" id="CHEBI:43474"/>
        <dbReference type="ChEBI" id="CHEBI:57705"/>
        <dbReference type="ChEBI" id="CHEBI:58702"/>
        <dbReference type="ChEBI" id="CHEBI:68483"/>
        <dbReference type="EC" id="2.5.1.7"/>
    </reaction>
</comment>
<comment type="pathway">
    <text evidence="1">Cell wall biogenesis; peptidoglycan biosynthesis.</text>
</comment>
<comment type="subcellular location">
    <subcellularLocation>
        <location evidence="1">Cytoplasm</location>
    </subcellularLocation>
</comment>
<comment type="similarity">
    <text evidence="1">Belongs to the EPSP synthase family. MurA subfamily.</text>
</comment>
<evidence type="ECO:0000255" key="1">
    <source>
        <dbReference type="HAMAP-Rule" id="MF_00111"/>
    </source>
</evidence>
<gene>
    <name evidence="1" type="primary">murA</name>
    <name type="ordered locus">BAbS19_I02620</name>
</gene>
<organism>
    <name type="scientific">Brucella abortus (strain S19)</name>
    <dbReference type="NCBI Taxonomy" id="430066"/>
    <lineage>
        <taxon>Bacteria</taxon>
        <taxon>Pseudomonadati</taxon>
        <taxon>Pseudomonadota</taxon>
        <taxon>Alphaproteobacteria</taxon>
        <taxon>Hyphomicrobiales</taxon>
        <taxon>Brucellaceae</taxon>
        <taxon>Brucella/Ochrobactrum group</taxon>
        <taxon>Brucella</taxon>
    </lineage>
</organism>
<keyword id="KW-0131">Cell cycle</keyword>
<keyword id="KW-0132">Cell division</keyword>
<keyword id="KW-0133">Cell shape</keyword>
<keyword id="KW-0961">Cell wall biogenesis/degradation</keyword>
<keyword id="KW-0963">Cytoplasm</keyword>
<keyword id="KW-0573">Peptidoglycan synthesis</keyword>
<keyword id="KW-0670">Pyruvate</keyword>
<keyword id="KW-0808">Transferase</keyword>
<accession>B2S906</accession>
<dbReference type="EC" id="2.5.1.7" evidence="1"/>
<dbReference type="EMBL" id="CP000887">
    <property type="protein sequence ID" value="ACD71805.1"/>
    <property type="molecule type" value="Genomic_DNA"/>
</dbReference>
<dbReference type="RefSeq" id="WP_002965536.1">
    <property type="nucleotide sequence ID" value="NC_010742.1"/>
</dbReference>
<dbReference type="SMR" id="B2S906"/>
<dbReference type="GeneID" id="97534345"/>
<dbReference type="KEGG" id="bmc:BAbS19_I02620"/>
<dbReference type="HOGENOM" id="CLU_027387_0_0_5"/>
<dbReference type="UniPathway" id="UPA00219"/>
<dbReference type="Proteomes" id="UP000002565">
    <property type="component" value="Chromosome 1"/>
</dbReference>
<dbReference type="GO" id="GO:0005737">
    <property type="term" value="C:cytoplasm"/>
    <property type="evidence" value="ECO:0007669"/>
    <property type="project" value="UniProtKB-SubCell"/>
</dbReference>
<dbReference type="GO" id="GO:0008760">
    <property type="term" value="F:UDP-N-acetylglucosamine 1-carboxyvinyltransferase activity"/>
    <property type="evidence" value="ECO:0007669"/>
    <property type="project" value="UniProtKB-UniRule"/>
</dbReference>
<dbReference type="GO" id="GO:0051301">
    <property type="term" value="P:cell division"/>
    <property type="evidence" value="ECO:0007669"/>
    <property type="project" value="UniProtKB-KW"/>
</dbReference>
<dbReference type="GO" id="GO:0071555">
    <property type="term" value="P:cell wall organization"/>
    <property type="evidence" value="ECO:0007669"/>
    <property type="project" value="UniProtKB-KW"/>
</dbReference>
<dbReference type="GO" id="GO:0009252">
    <property type="term" value="P:peptidoglycan biosynthetic process"/>
    <property type="evidence" value="ECO:0007669"/>
    <property type="project" value="UniProtKB-UniRule"/>
</dbReference>
<dbReference type="GO" id="GO:0008360">
    <property type="term" value="P:regulation of cell shape"/>
    <property type="evidence" value="ECO:0007669"/>
    <property type="project" value="UniProtKB-KW"/>
</dbReference>
<dbReference type="GO" id="GO:0019277">
    <property type="term" value="P:UDP-N-acetylgalactosamine biosynthetic process"/>
    <property type="evidence" value="ECO:0007669"/>
    <property type="project" value="InterPro"/>
</dbReference>
<dbReference type="CDD" id="cd01555">
    <property type="entry name" value="UdpNAET"/>
    <property type="match status" value="1"/>
</dbReference>
<dbReference type="FunFam" id="3.65.10.10:FF:000001">
    <property type="entry name" value="UDP-N-acetylglucosamine 1-carboxyvinyltransferase"/>
    <property type="match status" value="1"/>
</dbReference>
<dbReference type="Gene3D" id="3.65.10.10">
    <property type="entry name" value="Enolpyruvate transferase domain"/>
    <property type="match status" value="2"/>
</dbReference>
<dbReference type="HAMAP" id="MF_00111">
    <property type="entry name" value="MurA"/>
    <property type="match status" value="1"/>
</dbReference>
<dbReference type="InterPro" id="IPR001986">
    <property type="entry name" value="Enolpyruvate_Tfrase_dom"/>
</dbReference>
<dbReference type="InterPro" id="IPR036968">
    <property type="entry name" value="Enolpyruvate_Tfrase_sf"/>
</dbReference>
<dbReference type="InterPro" id="IPR050068">
    <property type="entry name" value="MurA_subfamily"/>
</dbReference>
<dbReference type="InterPro" id="IPR013792">
    <property type="entry name" value="RNA3'P_cycl/enolpyr_Trfase_a/b"/>
</dbReference>
<dbReference type="InterPro" id="IPR005750">
    <property type="entry name" value="UDP_GlcNAc_COvinyl_MurA"/>
</dbReference>
<dbReference type="NCBIfam" id="TIGR01072">
    <property type="entry name" value="murA"/>
    <property type="match status" value="1"/>
</dbReference>
<dbReference type="NCBIfam" id="NF006873">
    <property type="entry name" value="PRK09369.1"/>
    <property type="match status" value="1"/>
</dbReference>
<dbReference type="PANTHER" id="PTHR43783">
    <property type="entry name" value="UDP-N-ACETYLGLUCOSAMINE 1-CARBOXYVINYLTRANSFERASE"/>
    <property type="match status" value="1"/>
</dbReference>
<dbReference type="PANTHER" id="PTHR43783:SF1">
    <property type="entry name" value="UDP-N-ACETYLGLUCOSAMINE 1-CARBOXYVINYLTRANSFERASE"/>
    <property type="match status" value="1"/>
</dbReference>
<dbReference type="Pfam" id="PF00275">
    <property type="entry name" value="EPSP_synthase"/>
    <property type="match status" value="1"/>
</dbReference>
<dbReference type="SUPFAM" id="SSF55205">
    <property type="entry name" value="EPT/RTPC-like"/>
    <property type="match status" value="1"/>
</dbReference>
<protein>
    <recommendedName>
        <fullName evidence="1">UDP-N-acetylglucosamine 1-carboxyvinyltransferase</fullName>
        <ecNumber evidence="1">2.5.1.7</ecNumber>
    </recommendedName>
    <alternativeName>
        <fullName evidence="1">Enoylpyruvate transferase</fullName>
    </alternativeName>
    <alternativeName>
        <fullName evidence="1">UDP-N-acetylglucosamine enolpyruvyl transferase</fullName>
        <shortName evidence="1">EPT</shortName>
    </alternativeName>
</protein>
<reference key="1">
    <citation type="journal article" date="2008" name="PLoS ONE">
        <title>Genome sequence of Brucella abortus vaccine strain S19 compared to virulent strains yields candidate virulence genes.</title>
        <authorList>
            <person name="Crasta O.R."/>
            <person name="Folkerts O."/>
            <person name="Fei Z."/>
            <person name="Mane S.P."/>
            <person name="Evans C."/>
            <person name="Martino-Catt S."/>
            <person name="Bricker B."/>
            <person name="Yu G."/>
            <person name="Du L."/>
            <person name="Sobral B.W."/>
        </authorList>
    </citation>
    <scope>NUCLEOTIDE SEQUENCE [LARGE SCALE GENOMIC DNA]</scope>
    <source>
        <strain>S19</strain>
    </source>
</reference>
<proteinExistence type="inferred from homology"/>
<feature type="chain" id="PRO_1000094674" description="UDP-N-acetylglucosamine 1-carboxyvinyltransferase">
    <location>
        <begin position="1"/>
        <end position="429"/>
    </location>
</feature>
<feature type="active site" description="Proton donor" evidence="1">
    <location>
        <position position="126"/>
    </location>
</feature>
<feature type="binding site" evidence="1">
    <location>
        <begin position="22"/>
        <end position="23"/>
    </location>
    <ligand>
        <name>phosphoenolpyruvate</name>
        <dbReference type="ChEBI" id="CHEBI:58702"/>
    </ligand>
</feature>
<feature type="binding site" evidence="1">
    <location>
        <position position="102"/>
    </location>
    <ligand>
        <name>UDP-N-acetyl-alpha-D-glucosamine</name>
        <dbReference type="ChEBI" id="CHEBI:57705"/>
    </ligand>
</feature>
<feature type="binding site" evidence="1">
    <location>
        <begin position="131"/>
        <end position="135"/>
    </location>
    <ligand>
        <name>UDP-N-acetyl-alpha-D-glucosamine</name>
        <dbReference type="ChEBI" id="CHEBI:57705"/>
    </ligand>
</feature>
<feature type="binding site" evidence="1">
    <location>
        <begin position="171"/>
        <end position="174"/>
    </location>
    <ligand>
        <name>UDP-N-acetyl-alpha-D-glucosamine</name>
        <dbReference type="ChEBI" id="CHEBI:57705"/>
    </ligand>
</feature>
<feature type="binding site" evidence="1">
    <location>
        <position position="316"/>
    </location>
    <ligand>
        <name>UDP-N-acetyl-alpha-D-glucosamine</name>
        <dbReference type="ChEBI" id="CHEBI:57705"/>
    </ligand>
</feature>
<feature type="binding site" evidence="1">
    <location>
        <position position="338"/>
    </location>
    <ligand>
        <name>UDP-N-acetyl-alpha-D-glucosamine</name>
        <dbReference type="ChEBI" id="CHEBI:57705"/>
    </ligand>
</feature>
<feature type="modified residue" description="2-(S-cysteinyl)pyruvic acid O-phosphothioketal" evidence="1">
    <location>
        <position position="126"/>
    </location>
</feature>
<name>MURA_BRUA1</name>